<reference key="1">
    <citation type="journal article" date="1990" name="Genomics">
        <title>A method of sequencing without subcloning and its application to the identification of a novel ORF with a sequence suggestive of a transcriptional regulator in the water mold Achlya ambisexualis.</title>
        <authorList>
            <person name="Schowalter D.B."/>
            <person name="Toft D.O."/>
            <person name="Sommer S.S."/>
        </authorList>
    </citation>
    <scope>NUCLEOTIDE SEQUENCE [GENOMIC DNA]</scope>
</reference>
<name>NAT10_ACHAM</name>
<sequence>IHGDNKTRKGERKLHEERWQAASAAAHQHLSTPQTAAGGGRVLREVTLEMPIRYAPSDAVEKWLNNLLCLDCGSTPNRIIGGTPHPRECELYYVDRDSLFSYHKLSESFLQRIMALYVASHYKNQPNDLQLLSDAPAHHIFVLLGPQAEGQGNAGQLPDVLCVVQVALEGEISKESVAAQLSRGQRASGDLIPWTVAQQFQDNEFAGLSGARVVRIATHPDVTGMGYGSRAVELLTKYYQGELASGEFEEENEAAKPADEESDDESNLLKEKVKPRKALPPLLLPLTDRPAERLHWFGTSFGLTLQLYTFWQRSGFRSVYIRQTANPLTGEHTAIMLNALKCDDLPASPAAGWLDEFVGDARKRFMALLAYEF</sequence>
<comment type="function">
    <text evidence="1">RNA cytidine acetyltransferase with specificity toward both 18S rRNA and tRNAs. Catalyzes the formation of N(4)-acetylcytidine (ac4C) in 18S rRNA. Required for early nucleolar cleavages of precursor rRNA at sites A0, A1 and A2 during 18S rRNA synthesis. Catalyzes the formation of ac4C in serine and leucine tRNAs. Requires a tRNA-binding adapter protein for full tRNA acetyltransferase activity but not for 18S rRNA acetylation.</text>
</comment>
<comment type="catalytic activity">
    <reaction evidence="1">
        <text>a cytidine in 18S rRNA + acetyl-CoA + ATP + H2O = an N(4)-acetylcytidine in 18S rRNA + ADP + phosphate + CoA + H(+)</text>
        <dbReference type="Rhea" id="RHEA:51424"/>
        <dbReference type="Rhea" id="RHEA-COMP:13575"/>
        <dbReference type="Rhea" id="RHEA-COMP:13576"/>
        <dbReference type="ChEBI" id="CHEBI:15377"/>
        <dbReference type="ChEBI" id="CHEBI:15378"/>
        <dbReference type="ChEBI" id="CHEBI:30616"/>
        <dbReference type="ChEBI" id="CHEBI:43474"/>
        <dbReference type="ChEBI" id="CHEBI:57287"/>
        <dbReference type="ChEBI" id="CHEBI:57288"/>
        <dbReference type="ChEBI" id="CHEBI:74900"/>
        <dbReference type="ChEBI" id="CHEBI:82748"/>
        <dbReference type="ChEBI" id="CHEBI:456216"/>
    </reaction>
</comment>
<comment type="catalytic activity">
    <reaction evidence="1">
        <text>a cytidine in tRNA + acetyl-CoA + ATP + H2O = an N(4)-acetylcytidine in tRNA + ADP + phosphate + CoA + H(+)</text>
        <dbReference type="Rhea" id="RHEA:53876"/>
        <dbReference type="Rhea" id="RHEA-COMP:13670"/>
        <dbReference type="Rhea" id="RHEA-COMP:13671"/>
        <dbReference type="ChEBI" id="CHEBI:15377"/>
        <dbReference type="ChEBI" id="CHEBI:15378"/>
        <dbReference type="ChEBI" id="CHEBI:30616"/>
        <dbReference type="ChEBI" id="CHEBI:43474"/>
        <dbReference type="ChEBI" id="CHEBI:57287"/>
        <dbReference type="ChEBI" id="CHEBI:57288"/>
        <dbReference type="ChEBI" id="CHEBI:74900"/>
        <dbReference type="ChEBI" id="CHEBI:82748"/>
        <dbReference type="ChEBI" id="CHEBI:456216"/>
    </reaction>
</comment>
<comment type="subcellular location">
    <subcellularLocation>
        <location evidence="1">Nucleus</location>
        <location evidence="1">Nucleolus</location>
    </subcellularLocation>
</comment>
<comment type="similarity">
    <text evidence="3">Belongs to the RNA cytidine acetyltransferase family. NAT10 subfamily.</text>
</comment>
<comment type="caution">
    <text evidence="4">Was originally thought to be a steroid receptor on the basis of non-significant sequence similarities.</text>
</comment>
<proteinExistence type="inferred from homology"/>
<feature type="chain" id="PRO_0000215884" description="RNA cytidine acetyltransferase">
    <location>
        <begin position="1" status="less than"/>
        <end position="373" status="greater than"/>
    </location>
</feature>
<feature type="region of interest" description="Disordered" evidence="2">
    <location>
        <begin position="246"/>
        <end position="271"/>
    </location>
</feature>
<feature type="binding site" evidence="1">
    <location>
        <position position="53"/>
    </location>
    <ligand>
        <name>ATP</name>
        <dbReference type="ChEBI" id="CHEBI:30616"/>
    </ligand>
</feature>
<feature type="binding site" evidence="1">
    <location>
        <begin position="216"/>
        <end position="218"/>
    </location>
    <ligand>
        <name>acetyl-CoA</name>
        <dbReference type="ChEBI" id="CHEBI:57288"/>
    </ligand>
</feature>
<feature type="binding site" evidence="1">
    <location>
        <begin position="223"/>
        <end position="229"/>
    </location>
    <ligand>
        <name>acetyl-CoA</name>
        <dbReference type="ChEBI" id="CHEBI:57288"/>
    </ligand>
</feature>
<feature type="binding site" evidence="1">
    <location>
        <position position="313"/>
    </location>
    <ligand>
        <name>acetyl-CoA</name>
        <dbReference type="ChEBI" id="CHEBI:57288"/>
    </ligand>
</feature>
<feature type="non-terminal residue">
    <location>
        <position position="1"/>
    </location>
</feature>
<feature type="non-terminal residue">
    <location>
        <position position="373"/>
    </location>
</feature>
<protein>
    <recommendedName>
        <fullName evidence="1">RNA cytidine acetyltransferase</fullName>
        <ecNumber evidence="1">2.3.1.-</ecNumber>
    </recommendedName>
    <alternativeName>
        <fullName evidence="1">18S rRNA cytosine acetyltransferase</fullName>
    </alternativeName>
</protein>
<evidence type="ECO:0000250" key="1">
    <source>
        <dbReference type="UniProtKB" id="P76562"/>
    </source>
</evidence>
<evidence type="ECO:0000256" key="2">
    <source>
        <dbReference type="SAM" id="MobiDB-lite"/>
    </source>
</evidence>
<evidence type="ECO:0000305" key="3"/>
<evidence type="ECO:0000305" key="4">
    <source>
    </source>
</evidence>
<organism>
    <name type="scientific">Achlya ambisexualis</name>
    <name type="common">Water mold</name>
    <dbReference type="NCBI Taxonomy" id="4768"/>
    <lineage>
        <taxon>Eukaryota</taxon>
        <taxon>Sar</taxon>
        <taxon>Stramenopiles</taxon>
        <taxon>Oomycota</taxon>
        <taxon>Saprolegniales</taxon>
        <taxon>Saprolegniaceae</taxon>
        <taxon>Achlya</taxon>
    </lineage>
</organism>
<keyword id="KW-0012">Acyltransferase</keyword>
<keyword id="KW-0067">ATP-binding</keyword>
<keyword id="KW-0547">Nucleotide-binding</keyword>
<keyword id="KW-0539">Nucleus</keyword>
<keyword id="KW-0698">rRNA processing</keyword>
<keyword id="KW-0808">Transferase</keyword>
<keyword id="KW-0819">tRNA processing</keyword>
<dbReference type="EC" id="2.3.1.-" evidence="1"/>
<dbReference type="EMBL" id="M23451">
    <property type="protein sequence ID" value="AAA32628.1"/>
    <property type="molecule type" value="Genomic_DNA"/>
</dbReference>
<dbReference type="SMR" id="P54008"/>
<dbReference type="GO" id="GO:0030686">
    <property type="term" value="C:90S preribosome"/>
    <property type="evidence" value="ECO:0007669"/>
    <property type="project" value="TreeGrafter"/>
</dbReference>
<dbReference type="GO" id="GO:0005730">
    <property type="term" value="C:nucleolus"/>
    <property type="evidence" value="ECO:0007669"/>
    <property type="project" value="UniProtKB-SubCell"/>
</dbReference>
<dbReference type="GO" id="GO:1990883">
    <property type="term" value="F:18S rRNA cytidine N-acetyltransferase activity"/>
    <property type="evidence" value="ECO:0007669"/>
    <property type="project" value="TreeGrafter"/>
</dbReference>
<dbReference type="GO" id="GO:0005524">
    <property type="term" value="F:ATP binding"/>
    <property type="evidence" value="ECO:0007669"/>
    <property type="project" value="UniProtKB-KW"/>
</dbReference>
<dbReference type="GO" id="GO:0000049">
    <property type="term" value="F:tRNA binding"/>
    <property type="evidence" value="ECO:0007669"/>
    <property type="project" value="TreeGrafter"/>
</dbReference>
<dbReference type="GO" id="GO:0051392">
    <property type="term" value="F:tRNA N4-acetyltransferase activity"/>
    <property type="evidence" value="ECO:0007669"/>
    <property type="project" value="RHEA"/>
</dbReference>
<dbReference type="GO" id="GO:1904812">
    <property type="term" value="P:rRNA acetylation involved in maturation of SSU-rRNA"/>
    <property type="evidence" value="ECO:0007669"/>
    <property type="project" value="TreeGrafter"/>
</dbReference>
<dbReference type="GO" id="GO:0008033">
    <property type="term" value="P:tRNA processing"/>
    <property type="evidence" value="ECO:0007669"/>
    <property type="project" value="UniProtKB-KW"/>
</dbReference>
<dbReference type="Gene3D" id="3.40.630.30">
    <property type="match status" value="1"/>
</dbReference>
<dbReference type="InterPro" id="IPR000182">
    <property type="entry name" value="GNAT_dom"/>
</dbReference>
<dbReference type="InterPro" id="IPR007807">
    <property type="entry name" value="NAT10/TcmA_helicase"/>
</dbReference>
<dbReference type="InterPro" id="IPR032672">
    <property type="entry name" value="TmcA/NAT10/Kre33"/>
</dbReference>
<dbReference type="PANTHER" id="PTHR10925">
    <property type="entry name" value="N-ACETYLTRANSFERASE 10"/>
    <property type="match status" value="1"/>
</dbReference>
<dbReference type="PANTHER" id="PTHR10925:SF5">
    <property type="entry name" value="RNA CYTIDINE ACETYLTRANSFERASE"/>
    <property type="match status" value="1"/>
</dbReference>
<dbReference type="Pfam" id="PF13718">
    <property type="entry name" value="GNAT_acetyltr_2"/>
    <property type="match status" value="1"/>
</dbReference>
<dbReference type="Pfam" id="PF05127">
    <property type="entry name" value="NAT10_TcmA_helicase"/>
    <property type="match status" value="1"/>
</dbReference>
<accession>P54008</accession>